<proteinExistence type="inferred from homology"/>
<protein>
    <recommendedName>
        <fullName evidence="1">Photosystem II CP43 reaction center protein</fullName>
    </recommendedName>
    <alternativeName>
        <fullName evidence="1">PSII 43 kDa protein</fullName>
    </alternativeName>
    <alternativeName>
        <fullName evidence="1">Protein CP-43</fullName>
    </alternativeName>
</protein>
<keyword id="KW-0007">Acetylation</keyword>
<keyword id="KW-0148">Chlorophyll</keyword>
<keyword id="KW-0150">Chloroplast</keyword>
<keyword id="KW-0157">Chromophore</keyword>
<keyword id="KW-0464">Manganese</keyword>
<keyword id="KW-0472">Membrane</keyword>
<keyword id="KW-0479">Metal-binding</keyword>
<keyword id="KW-0597">Phosphoprotein</keyword>
<keyword id="KW-0602">Photosynthesis</keyword>
<keyword id="KW-0604">Photosystem II</keyword>
<keyword id="KW-0934">Plastid</keyword>
<keyword id="KW-1185">Reference proteome</keyword>
<keyword id="KW-0793">Thylakoid</keyword>
<keyword id="KW-0812">Transmembrane</keyword>
<keyword id="KW-1133">Transmembrane helix</keyword>
<gene>
    <name evidence="1" type="primary">psbC</name>
</gene>
<accession>Q2MIA4</accession>
<accession>Q2A7H3</accession>
<geneLocation type="chloroplast"/>
<dbReference type="EMBL" id="DQ347959">
    <property type="protein sequence ID" value="ABC56296.1"/>
    <property type="molecule type" value="Genomic_DNA"/>
</dbReference>
<dbReference type="EMBL" id="AM087200">
    <property type="protein sequence ID" value="CAJ32389.1"/>
    <property type="status" value="ALT_INIT"/>
    <property type="molecule type" value="Genomic_DNA"/>
</dbReference>
<dbReference type="RefSeq" id="AP_004924.1">
    <property type="nucleotide sequence ID" value="AC_000188.1"/>
</dbReference>
<dbReference type="RefSeq" id="YP_008563084.1">
    <property type="nucleotide sequence ID" value="NC_007898.3"/>
</dbReference>
<dbReference type="SMR" id="Q2MIA4"/>
<dbReference type="FunCoup" id="Q2MIA4">
    <property type="interactions" value="386"/>
</dbReference>
<dbReference type="STRING" id="4081.Q2MIA4"/>
<dbReference type="PaxDb" id="4081-Solyc10g047410.1.1"/>
<dbReference type="GeneID" id="3950405"/>
<dbReference type="KEGG" id="sly:3950405"/>
<dbReference type="eggNOG" id="ENOG502QR3X">
    <property type="taxonomic scope" value="Eukaryota"/>
</dbReference>
<dbReference type="InParanoid" id="Q2MIA4"/>
<dbReference type="OrthoDB" id="1926060at2759"/>
<dbReference type="Proteomes" id="UP000004994">
    <property type="component" value="Chloroplast"/>
</dbReference>
<dbReference type="ExpressionAtlas" id="Q2MIA4">
    <property type="expression patterns" value="baseline"/>
</dbReference>
<dbReference type="GO" id="GO:0009535">
    <property type="term" value="C:chloroplast thylakoid membrane"/>
    <property type="evidence" value="ECO:0007669"/>
    <property type="project" value="UniProtKB-SubCell"/>
</dbReference>
<dbReference type="GO" id="GO:0009523">
    <property type="term" value="C:photosystem II"/>
    <property type="evidence" value="ECO:0007669"/>
    <property type="project" value="UniProtKB-KW"/>
</dbReference>
<dbReference type="GO" id="GO:0016168">
    <property type="term" value="F:chlorophyll binding"/>
    <property type="evidence" value="ECO:0007669"/>
    <property type="project" value="UniProtKB-UniRule"/>
</dbReference>
<dbReference type="GO" id="GO:0045156">
    <property type="term" value="F:electron transporter, transferring electrons within the cyclic electron transport pathway of photosynthesis activity"/>
    <property type="evidence" value="ECO:0007669"/>
    <property type="project" value="InterPro"/>
</dbReference>
<dbReference type="GO" id="GO:0046872">
    <property type="term" value="F:metal ion binding"/>
    <property type="evidence" value="ECO:0007669"/>
    <property type="project" value="UniProtKB-KW"/>
</dbReference>
<dbReference type="GO" id="GO:0009772">
    <property type="term" value="P:photosynthetic electron transport in photosystem II"/>
    <property type="evidence" value="ECO:0007669"/>
    <property type="project" value="InterPro"/>
</dbReference>
<dbReference type="FunFam" id="1.10.10.670:FF:000001">
    <property type="entry name" value="Photosystem II CP43 reaction center protein"/>
    <property type="match status" value="1"/>
</dbReference>
<dbReference type="Gene3D" id="1.10.10.670">
    <property type="entry name" value="photosystem ii from thermosynechococcus elongatus"/>
    <property type="match status" value="1"/>
</dbReference>
<dbReference type="HAMAP" id="MF_01496">
    <property type="entry name" value="PSII_PsbC_CP43"/>
    <property type="match status" value="1"/>
</dbReference>
<dbReference type="InterPro" id="IPR000932">
    <property type="entry name" value="PS_antenna-like"/>
</dbReference>
<dbReference type="InterPro" id="IPR036001">
    <property type="entry name" value="PS_II_antenna-like_sf"/>
</dbReference>
<dbReference type="InterPro" id="IPR005869">
    <property type="entry name" value="PSII_PsbC"/>
</dbReference>
<dbReference type="InterPro" id="IPR044900">
    <property type="entry name" value="PSII_PsbC_sf"/>
</dbReference>
<dbReference type="NCBIfam" id="TIGR01153">
    <property type="entry name" value="psbC"/>
    <property type="match status" value="1"/>
</dbReference>
<dbReference type="Pfam" id="PF00421">
    <property type="entry name" value="PSII"/>
    <property type="match status" value="1"/>
</dbReference>
<dbReference type="SUPFAM" id="SSF161077">
    <property type="entry name" value="Photosystem II antenna protein-like"/>
    <property type="match status" value="1"/>
</dbReference>
<feature type="propeptide" id="PRO_0000431209" evidence="1">
    <location>
        <begin position="1"/>
        <end position="14"/>
    </location>
</feature>
<feature type="chain" id="PRO_0000277412" description="Photosystem II CP43 reaction center protein" evidence="1">
    <location>
        <begin position="15"/>
        <end position="473"/>
    </location>
</feature>
<feature type="transmembrane region" description="Helical" evidence="1">
    <location>
        <begin position="69"/>
        <end position="93"/>
    </location>
</feature>
<feature type="transmembrane region" description="Helical" evidence="1">
    <location>
        <begin position="134"/>
        <end position="155"/>
    </location>
</feature>
<feature type="transmembrane region" description="Helical" evidence="1">
    <location>
        <begin position="178"/>
        <end position="200"/>
    </location>
</feature>
<feature type="transmembrane region" description="Helical" evidence="1">
    <location>
        <begin position="255"/>
        <end position="275"/>
    </location>
</feature>
<feature type="transmembrane region" description="Helical" evidence="1">
    <location>
        <begin position="291"/>
        <end position="312"/>
    </location>
</feature>
<feature type="transmembrane region" description="Helical" evidence="1">
    <location>
        <begin position="447"/>
        <end position="471"/>
    </location>
</feature>
<feature type="binding site" evidence="1">
    <location>
        <position position="367"/>
    </location>
    <ligand>
        <name>[CaMn4O5] cluster</name>
        <dbReference type="ChEBI" id="CHEBI:189552"/>
    </ligand>
</feature>
<feature type="modified residue" description="N-acetylthreonine" evidence="1">
    <location>
        <position position="15"/>
    </location>
</feature>
<feature type="modified residue" description="Phosphothreonine" evidence="1">
    <location>
        <position position="15"/>
    </location>
</feature>
<organism>
    <name type="scientific">Solanum lycopersicum</name>
    <name type="common">Tomato</name>
    <name type="synonym">Lycopersicon esculentum</name>
    <dbReference type="NCBI Taxonomy" id="4081"/>
    <lineage>
        <taxon>Eukaryota</taxon>
        <taxon>Viridiplantae</taxon>
        <taxon>Streptophyta</taxon>
        <taxon>Embryophyta</taxon>
        <taxon>Tracheophyta</taxon>
        <taxon>Spermatophyta</taxon>
        <taxon>Magnoliopsida</taxon>
        <taxon>eudicotyledons</taxon>
        <taxon>Gunneridae</taxon>
        <taxon>Pentapetalae</taxon>
        <taxon>asterids</taxon>
        <taxon>lamiids</taxon>
        <taxon>Solanales</taxon>
        <taxon>Solanaceae</taxon>
        <taxon>Solanoideae</taxon>
        <taxon>Solaneae</taxon>
        <taxon>Solanum</taxon>
        <taxon>Solanum subgen. Lycopersicon</taxon>
    </lineage>
</organism>
<sequence>MKTLYSLRRFYHVETLFNGTLALAGRDQETTGFAWWAGNARLINLSGKLLGAHVAHAGLIVFWAGAMNLFEVAHFVPEKPMYEQGLILLPHLATLGWGVGPGGEVIDTFPYFVSGVLHLISSAVLGFGGIYHALLGPETLEESFPFFGYVWKDRNKMTTILGIHLILLGIGAFLLVFKALYFGGVYDTWAPGGGDVRKITNLTLSPSIIFGYLLKSPFGGEGWIVSVDDLEDIIGGHVWLGSICILGGIWHILTKPFAWARRALVWSGEAYLSYSLGALAVFGFIACCFVWFNNTAYPSEFYGPTGPEASQAQAFTFLVRDQRLGANVGSAQGPTGLGKYLMRSPTGEVIFGGETMRFWDLRAPWLEPLRGPNGLDLSRLKKDIQPWQERRSAEYMTHAPLGSLNSVGGVATEINAVNYVSPRSWLATSHFVLGFFFFVGHLWHAGRARAAAAGFEKGIDRDFEPVLSMTPLN</sequence>
<evidence type="ECO:0000255" key="1">
    <source>
        <dbReference type="HAMAP-Rule" id="MF_01496"/>
    </source>
</evidence>
<evidence type="ECO:0000305" key="2"/>
<name>PSBC_SOLLC</name>
<comment type="function">
    <text evidence="1">One of the components of the core complex of photosystem II (PSII). It binds chlorophyll and helps catalyze the primary light-induced photochemical processes of PSII. PSII is a light-driven water:plastoquinone oxidoreductase, using light energy to abstract electrons from H(2)O, generating O(2) and a proton gradient subsequently used for ATP formation.</text>
</comment>
<comment type="cofactor">
    <text evidence="1">Binds multiple chlorophylls and provides some of the ligands for the Ca-4Mn-5O cluster of the oxygen-evolving complex. It may also provide a ligand for a Cl- that is required for oxygen evolution. PSII binds additional chlorophylls, carotenoids and specific lipids.</text>
</comment>
<comment type="subunit">
    <text evidence="1">PSII is composed of 1 copy each of membrane proteins PsbA, PsbB, PsbC, PsbD, PsbE, PsbF, PsbH, PsbI, PsbJ, PsbK, PsbL, PsbM, PsbT, PsbX, PsbY, PsbZ, Psb30/Ycf12, at least 3 peripheral proteins of the oxygen-evolving complex and a large number of cofactors. It forms dimeric complexes.</text>
</comment>
<comment type="subcellular location">
    <subcellularLocation>
        <location evidence="1">Plastid</location>
        <location evidence="1">Chloroplast thylakoid membrane</location>
        <topology evidence="1">Multi-pass membrane protein</topology>
    </subcellularLocation>
</comment>
<comment type="similarity">
    <text evidence="1">Belongs to the PsbB/PsbC family. PsbC subfamily.</text>
</comment>
<comment type="sequence caution" evidence="2">
    <conflict type="erroneous initiation">
        <sequence resource="EMBL-CDS" id="CAJ32389"/>
    </conflict>
    <text>Truncated N-terminus.</text>
</comment>
<reference key="1">
    <citation type="journal article" date="2006" name="Theor. Appl. Genet.">
        <title>Complete chloroplast genome sequences of Solanum bulbocastanum, Solanum lycopersicum and comparative analyses with other Solanaceae genomes.</title>
        <authorList>
            <person name="Daniell H."/>
            <person name="Lee S.-B."/>
            <person name="Grevich J."/>
            <person name="Saski C."/>
            <person name="Quesada-Vargas T."/>
            <person name="Guda C."/>
            <person name="Tomkins J."/>
            <person name="Jansen R.K."/>
        </authorList>
    </citation>
    <scope>NUCLEOTIDE SEQUENCE [LARGE SCALE GENOMIC DNA]</scope>
    <source>
        <strain>cv. LA3023</strain>
    </source>
</reference>
<reference key="2">
    <citation type="journal article" date="2006" name="J. Mol. Evol.">
        <title>Sequence of the tomato chloroplast DNA and evolutionary comparison of solanaceous plastid genomes.</title>
        <authorList>
            <person name="Kahlau S."/>
            <person name="Aspinall S."/>
            <person name="Gray J.C."/>
            <person name="Bock R."/>
        </authorList>
    </citation>
    <scope>NUCLEOTIDE SEQUENCE [LARGE SCALE GENOMIC DNA]</scope>
    <source>
        <strain>cv. IPA-6</strain>
    </source>
</reference>